<evidence type="ECO:0000255" key="1">
    <source>
        <dbReference type="HAMAP-Rule" id="MF_01164"/>
    </source>
</evidence>
<evidence type="ECO:0000305" key="2"/>
<feature type="chain" id="PRO_0000059204" description="Undecaprenyl-phosphate 4-deoxy-4-formamido-L-arabinose transferase">
    <location>
        <begin position="1"/>
        <end position="322"/>
    </location>
</feature>
<feature type="topological domain" description="Cytoplasmic" evidence="1">
    <location>
        <begin position="1"/>
        <end position="235"/>
    </location>
</feature>
<feature type="transmembrane region" description="Helical" evidence="1">
    <location>
        <begin position="236"/>
        <end position="256"/>
    </location>
</feature>
<feature type="topological domain" description="Periplasmic" evidence="1">
    <location>
        <begin position="257"/>
        <end position="269"/>
    </location>
</feature>
<feature type="transmembrane region" description="Helical" evidence="1">
    <location>
        <begin position="270"/>
        <end position="290"/>
    </location>
</feature>
<feature type="topological domain" description="Cytoplasmic" evidence="1">
    <location>
        <begin position="291"/>
        <end position="322"/>
    </location>
</feature>
<feature type="sequence conflict" description="In Ref. 2; AAP17666." evidence="2" ref="2">
    <original>R</original>
    <variation>H</variation>
    <location>
        <position position="137"/>
    </location>
</feature>
<proteinExistence type="inferred from homology"/>
<keyword id="KW-0046">Antibiotic resistance</keyword>
<keyword id="KW-0997">Cell inner membrane</keyword>
<keyword id="KW-1003">Cell membrane</keyword>
<keyword id="KW-0328">Glycosyltransferase</keyword>
<keyword id="KW-0441">Lipid A biosynthesis</keyword>
<keyword id="KW-0444">Lipid biosynthesis</keyword>
<keyword id="KW-0443">Lipid metabolism</keyword>
<keyword id="KW-0448">Lipopolysaccharide biosynthesis</keyword>
<keyword id="KW-0472">Membrane</keyword>
<keyword id="KW-1185">Reference proteome</keyword>
<keyword id="KW-0808">Transferase</keyword>
<keyword id="KW-0812">Transmembrane</keyword>
<keyword id="KW-1133">Transmembrane helix</keyword>
<dbReference type="EC" id="2.4.2.53" evidence="1"/>
<dbReference type="EMBL" id="AE005674">
    <property type="protein sequence ID" value="AAN43847.1"/>
    <property type="molecule type" value="Genomic_DNA"/>
</dbReference>
<dbReference type="EMBL" id="AE014073">
    <property type="protein sequence ID" value="AAP17666.1"/>
    <property type="molecule type" value="Genomic_DNA"/>
</dbReference>
<dbReference type="RefSeq" id="NP_708140.1">
    <property type="nucleotide sequence ID" value="NC_004337.2"/>
</dbReference>
<dbReference type="RefSeq" id="WP_000461651.1">
    <property type="nucleotide sequence ID" value="NZ_WPGW01000032.1"/>
</dbReference>
<dbReference type="SMR" id="Q7UC63"/>
<dbReference type="STRING" id="198214.SF2333"/>
<dbReference type="PaxDb" id="198214-SF2333"/>
<dbReference type="GeneID" id="1027227"/>
<dbReference type="KEGG" id="sfl:SF2333"/>
<dbReference type="KEGG" id="sfx:S2466"/>
<dbReference type="PATRIC" id="fig|198214.7.peg.2795"/>
<dbReference type="HOGENOM" id="CLU_033536_0_0_6"/>
<dbReference type="UniPathway" id="UPA00030"/>
<dbReference type="UniPathway" id="UPA00036">
    <property type="reaction ID" value="UER00495"/>
</dbReference>
<dbReference type="Proteomes" id="UP000001006">
    <property type="component" value="Chromosome"/>
</dbReference>
<dbReference type="Proteomes" id="UP000002673">
    <property type="component" value="Chromosome"/>
</dbReference>
<dbReference type="GO" id="GO:0005886">
    <property type="term" value="C:plasma membrane"/>
    <property type="evidence" value="ECO:0007669"/>
    <property type="project" value="UniProtKB-SubCell"/>
</dbReference>
<dbReference type="GO" id="GO:0016780">
    <property type="term" value="F:phosphotransferase activity, for other substituted phosphate groups"/>
    <property type="evidence" value="ECO:0007669"/>
    <property type="project" value="UniProtKB-UniRule"/>
</dbReference>
<dbReference type="GO" id="GO:0099621">
    <property type="term" value="F:undecaprenyl-phosphate 4-deoxy-4-formamido-L-arabinose transferase activity"/>
    <property type="evidence" value="ECO:0007669"/>
    <property type="project" value="UniProtKB-EC"/>
</dbReference>
<dbReference type="GO" id="GO:0036108">
    <property type="term" value="P:4-amino-4-deoxy-alpha-L-arabinopyranosyl undecaprenyl phosphate biosynthetic process"/>
    <property type="evidence" value="ECO:0007669"/>
    <property type="project" value="UniProtKB-UniRule"/>
</dbReference>
<dbReference type="GO" id="GO:0009245">
    <property type="term" value="P:lipid A biosynthetic process"/>
    <property type="evidence" value="ECO:0007669"/>
    <property type="project" value="UniProtKB-UniRule"/>
</dbReference>
<dbReference type="GO" id="GO:0009103">
    <property type="term" value="P:lipopolysaccharide biosynthetic process"/>
    <property type="evidence" value="ECO:0007669"/>
    <property type="project" value="UniProtKB-UniRule"/>
</dbReference>
<dbReference type="GO" id="GO:0046677">
    <property type="term" value="P:response to antibiotic"/>
    <property type="evidence" value="ECO:0007669"/>
    <property type="project" value="UniProtKB-KW"/>
</dbReference>
<dbReference type="CDD" id="cd04187">
    <property type="entry name" value="DPM1_like_bac"/>
    <property type="match status" value="1"/>
</dbReference>
<dbReference type="FunFam" id="3.90.550.10:FF:000019">
    <property type="entry name" value="Undecaprenyl-phosphate 4-deoxy-4-formamido-L-arabinose transferase"/>
    <property type="match status" value="1"/>
</dbReference>
<dbReference type="Gene3D" id="3.90.550.10">
    <property type="entry name" value="Spore Coat Polysaccharide Biosynthesis Protein SpsA, Chain A"/>
    <property type="match status" value="1"/>
</dbReference>
<dbReference type="HAMAP" id="MF_01164">
    <property type="entry name" value="ArnC_transfer"/>
    <property type="match status" value="1"/>
</dbReference>
<dbReference type="InterPro" id="IPR022857">
    <property type="entry name" value="ArnC_tfrase"/>
</dbReference>
<dbReference type="InterPro" id="IPR001173">
    <property type="entry name" value="Glyco_trans_2-like"/>
</dbReference>
<dbReference type="InterPro" id="IPR050256">
    <property type="entry name" value="Glycosyltransferase_2"/>
</dbReference>
<dbReference type="InterPro" id="IPR029044">
    <property type="entry name" value="Nucleotide-diphossugar_trans"/>
</dbReference>
<dbReference type="NCBIfam" id="NF007986">
    <property type="entry name" value="PRK10714.1"/>
    <property type="match status" value="1"/>
</dbReference>
<dbReference type="PANTHER" id="PTHR48090:SF3">
    <property type="entry name" value="UNDECAPRENYL-PHOSPHATE 4-DEOXY-4-FORMAMIDO-L-ARABINOSE TRANSFERASE"/>
    <property type="match status" value="1"/>
</dbReference>
<dbReference type="PANTHER" id="PTHR48090">
    <property type="entry name" value="UNDECAPRENYL-PHOSPHATE 4-DEOXY-4-FORMAMIDO-L-ARABINOSE TRANSFERASE-RELATED"/>
    <property type="match status" value="1"/>
</dbReference>
<dbReference type="Pfam" id="PF00535">
    <property type="entry name" value="Glycos_transf_2"/>
    <property type="match status" value="1"/>
</dbReference>
<dbReference type="SUPFAM" id="SSF53448">
    <property type="entry name" value="Nucleotide-diphospho-sugar transferases"/>
    <property type="match status" value="1"/>
</dbReference>
<organism>
    <name type="scientific">Shigella flexneri</name>
    <dbReference type="NCBI Taxonomy" id="623"/>
    <lineage>
        <taxon>Bacteria</taxon>
        <taxon>Pseudomonadati</taxon>
        <taxon>Pseudomonadota</taxon>
        <taxon>Gammaproteobacteria</taxon>
        <taxon>Enterobacterales</taxon>
        <taxon>Enterobacteriaceae</taxon>
        <taxon>Shigella</taxon>
    </lineage>
</organism>
<gene>
    <name evidence="1" type="primary">arnC</name>
    <name type="ordered locus">SF2333</name>
    <name type="ordered locus">S2466</name>
</gene>
<accession>Q7UC63</accession>
<accession>Q83KB8</accession>
<protein>
    <recommendedName>
        <fullName evidence="1">Undecaprenyl-phosphate 4-deoxy-4-formamido-L-arabinose transferase</fullName>
        <ecNumber evidence="1">2.4.2.53</ecNumber>
    </recommendedName>
    <alternativeName>
        <fullName evidence="1">Undecaprenyl-phosphate Ara4FN transferase</fullName>
        <shortName evidence="1">Ara4FN transferase</shortName>
    </alternativeName>
</protein>
<reference key="1">
    <citation type="journal article" date="2002" name="Nucleic Acids Res.">
        <title>Genome sequence of Shigella flexneri 2a: insights into pathogenicity through comparison with genomes of Escherichia coli K12 and O157.</title>
        <authorList>
            <person name="Jin Q."/>
            <person name="Yuan Z."/>
            <person name="Xu J."/>
            <person name="Wang Y."/>
            <person name="Shen Y."/>
            <person name="Lu W."/>
            <person name="Wang J."/>
            <person name="Liu H."/>
            <person name="Yang J."/>
            <person name="Yang F."/>
            <person name="Zhang X."/>
            <person name="Zhang J."/>
            <person name="Yang G."/>
            <person name="Wu H."/>
            <person name="Qu D."/>
            <person name="Dong J."/>
            <person name="Sun L."/>
            <person name="Xue Y."/>
            <person name="Zhao A."/>
            <person name="Gao Y."/>
            <person name="Zhu J."/>
            <person name="Kan B."/>
            <person name="Ding K."/>
            <person name="Chen S."/>
            <person name="Cheng H."/>
            <person name="Yao Z."/>
            <person name="He B."/>
            <person name="Chen R."/>
            <person name="Ma D."/>
            <person name="Qiang B."/>
            <person name="Wen Y."/>
            <person name="Hou Y."/>
            <person name="Yu J."/>
        </authorList>
    </citation>
    <scope>NUCLEOTIDE SEQUENCE [LARGE SCALE GENOMIC DNA]</scope>
    <source>
        <strain>301 / Serotype 2a</strain>
    </source>
</reference>
<reference key="2">
    <citation type="journal article" date="2003" name="Infect. Immun.">
        <title>Complete genome sequence and comparative genomics of Shigella flexneri serotype 2a strain 2457T.</title>
        <authorList>
            <person name="Wei J."/>
            <person name="Goldberg M.B."/>
            <person name="Burland V."/>
            <person name="Venkatesan M.M."/>
            <person name="Deng W."/>
            <person name="Fournier G."/>
            <person name="Mayhew G.F."/>
            <person name="Plunkett G. III"/>
            <person name="Rose D.J."/>
            <person name="Darling A."/>
            <person name="Mau B."/>
            <person name="Perna N.T."/>
            <person name="Payne S.M."/>
            <person name="Runyen-Janecky L.J."/>
            <person name="Zhou S."/>
            <person name="Schwartz D.C."/>
            <person name="Blattner F.R."/>
        </authorList>
    </citation>
    <scope>NUCLEOTIDE SEQUENCE [LARGE SCALE GENOMIC DNA]</scope>
    <source>
        <strain>ATCC 700930 / 2457T / Serotype 2a</strain>
    </source>
</reference>
<name>ARNC_SHIFL</name>
<sequence length="322" mass="36339">MFEIHPVKKVSVVIPVYNEQESLPELIRRTTTACESLGKEYEILLIDDGSSDNSAHMLVEASQAENSHIVSILINRNYGQHSAIMAGFSHVTGDLIITLDADLQNPPEEIPRLVAKADEGYDVVGTVRQNRQDSWFRKTASKMINRLIQRTTGKAMGDYGCMLRAYRRHIVDAMLHCHERSTFIPILANIFARRAIEIPVHHAEREFGESKYSFMRLINLMYDLVTCLTTTPLRMLSLLGSIIAIGGFSIAVLLVILRLTFGPQWAAEGVFMLFAVLFTFIGAQFIGMGLLGEYIGRIYTDVRARPRYFVQQVIRPSSKENE</sequence>
<comment type="function">
    <text>Catalyzes the transfer of 4-deoxy-4-formamido-L-arabinose from UDP to undecaprenyl phosphate. The modified arabinose is attached to lipid A and is required for resistance to polymyxin and cationic antimicrobial peptides.</text>
</comment>
<comment type="catalytic activity">
    <reaction evidence="1">
        <text>UDP-4-deoxy-4-formamido-beta-L-arabinose + di-trans,octa-cis-undecaprenyl phosphate = 4-deoxy-4-formamido-alpha-L-arabinopyranosyl di-trans,octa-cis-undecaprenyl phosphate + UDP</text>
        <dbReference type="Rhea" id="RHEA:27722"/>
        <dbReference type="ChEBI" id="CHEBI:58223"/>
        <dbReference type="ChEBI" id="CHEBI:58709"/>
        <dbReference type="ChEBI" id="CHEBI:58909"/>
        <dbReference type="ChEBI" id="CHEBI:60392"/>
        <dbReference type="EC" id="2.4.2.53"/>
    </reaction>
</comment>
<comment type="pathway">
    <text evidence="1">Glycolipid biosynthesis; 4-amino-4-deoxy-alpha-L-arabinose undecaprenyl phosphate biosynthesis; 4-amino-4-deoxy-alpha-L-arabinose undecaprenyl phosphate from UDP-4-deoxy-4-formamido-beta-L-arabinose and undecaprenyl phosphate: step 1/2.</text>
</comment>
<comment type="pathway">
    <text evidence="1">Bacterial outer membrane biogenesis; lipopolysaccharide biosynthesis.</text>
</comment>
<comment type="subcellular location">
    <subcellularLocation>
        <location evidence="1">Cell inner membrane</location>
        <topology evidence="1">Multi-pass membrane protein</topology>
    </subcellularLocation>
</comment>
<comment type="similarity">
    <text evidence="1">Belongs to the glycosyltransferase 2 family.</text>
</comment>